<gene>
    <name evidence="1" type="primary">aroK</name>
    <name type="ordered locus">BURPS1710b_3729</name>
</gene>
<protein>
    <recommendedName>
        <fullName evidence="1">Shikimate kinase</fullName>
        <shortName evidence="1">SK</shortName>
        <ecNumber evidence="1">2.7.1.71</ecNumber>
    </recommendedName>
</protein>
<feature type="chain" id="PRO_0000237859" description="Shikimate kinase">
    <location>
        <begin position="1"/>
        <end position="184"/>
    </location>
</feature>
<feature type="binding site" evidence="1">
    <location>
        <begin position="17"/>
        <end position="22"/>
    </location>
    <ligand>
        <name>ATP</name>
        <dbReference type="ChEBI" id="CHEBI:30616"/>
    </ligand>
</feature>
<feature type="binding site" evidence="1">
    <location>
        <position position="21"/>
    </location>
    <ligand>
        <name>Mg(2+)</name>
        <dbReference type="ChEBI" id="CHEBI:18420"/>
    </ligand>
</feature>
<feature type="binding site" evidence="1">
    <location>
        <position position="39"/>
    </location>
    <ligand>
        <name>substrate</name>
    </ligand>
</feature>
<feature type="binding site" evidence="1">
    <location>
        <position position="63"/>
    </location>
    <ligand>
        <name>substrate</name>
    </ligand>
</feature>
<feature type="binding site" evidence="1">
    <location>
        <position position="85"/>
    </location>
    <ligand>
        <name>substrate</name>
    </ligand>
</feature>
<feature type="binding site" evidence="1">
    <location>
        <position position="123"/>
    </location>
    <ligand>
        <name>ATP</name>
        <dbReference type="ChEBI" id="CHEBI:30616"/>
    </ligand>
</feature>
<feature type="binding site" evidence="1">
    <location>
        <position position="142"/>
    </location>
    <ligand>
        <name>substrate</name>
    </ligand>
</feature>
<proteinExistence type="inferred from homology"/>
<accession>Q3JMW0</accession>
<keyword id="KW-0028">Amino-acid biosynthesis</keyword>
<keyword id="KW-0057">Aromatic amino acid biosynthesis</keyword>
<keyword id="KW-0067">ATP-binding</keyword>
<keyword id="KW-0963">Cytoplasm</keyword>
<keyword id="KW-0418">Kinase</keyword>
<keyword id="KW-0460">Magnesium</keyword>
<keyword id="KW-0479">Metal-binding</keyword>
<keyword id="KW-0547">Nucleotide-binding</keyword>
<keyword id="KW-0808">Transferase</keyword>
<organism>
    <name type="scientific">Burkholderia pseudomallei (strain 1710b)</name>
    <dbReference type="NCBI Taxonomy" id="320372"/>
    <lineage>
        <taxon>Bacteria</taxon>
        <taxon>Pseudomonadati</taxon>
        <taxon>Pseudomonadota</taxon>
        <taxon>Betaproteobacteria</taxon>
        <taxon>Burkholderiales</taxon>
        <taxon>Burkholderiaceae</taxon>
        <taxon>Burkholderia</taxon>
        <taxon>pseudomallei group</taxon>
    </lineage>
</organism>
<comment type="function">
    <text evidence="1">Catalyzes the specific phosphorylation of the 3-hydroxyl group of shikimic acid using ATP as a cosubstrate.</text>
</comment>
<comment type="catalytic activity">
    <reaction evidence="1">
        <text>shikimate + ATP = 3-phosphoshikimate + ADP + H(+)</text>
        <dbReference type="Rhea" id="RHEA:13121"/>
        <dbReference type="ChEBI" id="CHEBI:15378"/>
        <dbReference type="ChEBI" id="CHEBI:30616"/>
        <dbReference type="ChEBI" id="CHEBI:36208"/>
        <dbReference type="ChEBI" id="CHEBI:145989"/>
        <dbReference type="ChEBI" id="CHEBI:456216"/>
        <dbReference type="EC" id="2.7.1.71"/>
    </reaction>
</comment>
<comment type="cofactor">
    <cofactor evidence="1">
        <name>Mg(2+)</name>
        <dbReference type="ChEBI" id="CHEBI:18420"/>
    </cofactor>
    <text evidence="1">Binds 1 Mg(2+) ion per subunit.</text>
</comment>
<comment type="pathway">
    <text evidence="1">Metabolic intermediate biosynthesis; chorismate biosynthesis; chorismate from D-erythrose 4-phosphate and phosphoenolpyruvate: step 5/7.</text>
</comment>
<comment type="subunit">
    <text evidence="1">Monomer.</text>
</comment>
<comment type="subcellular location">
    <subcellularLocation>
        <location evidence="1">Cytoplasm</location>
    </subcellularLocation>
</comment>
<comment type="similarity">
    <text evidence="1">Belongs to the shikimate kinase family.</text>
</comment>
<comment type="sequence caution" evidence="2">
    <conflict type="erroneous initiation">
        <sequence resource="EMBL-CDS" id="ABA49770"/>
    </conflict>
</comment>
<sequence>MQARDPHVNVIFVGLMGAGKTTVGRAVARRLDRPFFDSDHEIEARTGARIPVIFELEGEAGFRDREAQMIAELTQRENIVLATGGGAILRPENRKLLHERGLVVYLRANPHDLWLRTRKDKNRPLLQTDDPKAKLEALYEARDPLYRECAHFVIETGRPSVNGLVNMVLMQLEMAGIVAKPLQA</sequence>
<dbReference type="EC" id="2.7.1.71" evidence="1"/>
<dbReference type="EMBL" id="CP000124">
    <property type="protein sequence ID" value="ABA49770.1"/>
    <property type="status" value="ALT_INIT"/>
    <property type="molecule type" value="Genomic_DNA"/>
</dbReference>
<dbReference type="RefSeq" id="WP_004535019.1">
    <property type="nucleotide sequence ID" value="NC_007434.1"/>
</dbReference>
<dbReference type="SMR" id="Q3JMW0"/>
<dbReference type="EnsemblBacteria" id="ABA49770">
    <property type="protein sequence ID" value="ABA49770"/>
    <property type="gene ID" value="BURPS1710b_3729"/>
</dbReference>
<dbReference type="KEGG" id="bpm:BURPS1710b_3729"/>
<dbReference type="HOGENOM" id="CLU_057607_2_2_4"/>
<dbReference type="UniPathway" id="UPA00053">
    <property type="reaction ID" value="UER00088"/>
</dbReference>
<dbReference type="Proteomes" id="UP000002700">
    <property type="component" value="Chromosome I"/>
</dbReference>
<dbReference type="GO" id="GO:0005829">
    <property type="term" value="C:cytosol"/>
    <property type="evidence" value="ECO:0007669"/>
    <property type="project" value="TreeGrafter"/>
</dbReference>
<dbReference type="GO" id="GO:0005524">
    <property type="term" value="F:ATP binding"/>
    <property type="evidence" value="ECO:0007669"/>
    <property type="project" value="UniProtKB-UniRule"/>
</dbReference>
<dbReference type="GO" id="GO:0000287">
    <property type="term" value="F:magnesium ion binding"/>
    <property type="evidence" value="ECO:0007669"/>
    <property type="project" value="UniProtKB-UniRule"/>
</dbReference>
<dbReference type="GO" id="GO:0004765">
    <property type="term" value="F:shikimate kinase activity"/>
    <property type="evidence" value="ECO:0007669"/>
    <property type="project" value="UniProtKB-UniRule"/>
</dbReference>
<dbReference type="GO" id="GO:0008652">
    <property type="term" value="P:amino acid biosynthetic process"/>
    <property type="evidence" value="ECO:0007669"/>
    <property type="project" value="UniProtKB-KW"/>
</dbReference>
<dbReference type="GO" id="GO:0009073">
    <property type="term" value="P:aromatic amino acid family biosynthetic process"/>
    <property type="evidence" value="ECO:0007669"/>
    <property type="project" value="UniProtKB-KW"/>
</dbReference>
<dbReference type="GO" id="GO:0009423">
    <property type="term" value="P:chorismate biosynthetic process"/>
    <property type="evidence" value="ECO:0007669"/>
    <property type="project" value="UniProtKB-UniRule"/>
</dbReference>
<dbReference type="CDD" id="cd00464">
    <property type="entry name" value="SK"/>
    <property type="match status" value="1"/>
</dbReference>
<dbReference type="Gene3D" id="3.40.50.300">
    <property type="entry name" value="P-loop containing nucleotide triphosphate hydrolases"/>
    <property type="match status" value="1"/>
</dbReference>
<dbReference type="HAMAP" id="MF_00109">
    <property type="entry name" value="Shikimate_kinase"/>
    <property type="match status" value="1"/>
</dbReference>
<dbReference type="InterPro" id="IPR027417">
    <property type="entry name" value="P-loop_NTPase"/>
</dbReference>
<dbReference type="InterPro" id="IPR031322">
    <property type="entry name" value="Shikimate/glucono_kinase"/>
</dbReference>
<dbReference type="InterPro" id="IPR000623">
    <property type="entry name" value="Shikimate_kinase/TSH1"/>
</dbReference>
<dbReference type="InterPro" id="IPR023000">
    <property type="entry name" value="Shikimate_kinase_CS"/>
</dbReference>
<dbReference type="PANTHER" id="PTHR21087">
    <property type="entry name" value="SHIKIMATE KINASE"/>
    <property type="match status" value="1"/>
</dbReference>
<dbReference type="PANTHER" id="PTHR21087:SF16">
    <property type="entry name" value="SHIKIMATE KINASE 1, CHLOROPLASTIC"/>
    <property type="match status" value="1"/>
</dbReference>
<dbReference type="Pfam" id="PF01202">
    <property type="entry name" value="SKI"/>
    <property type="match status" value="1"/>
</dbReference>
<dbReference type="PRINTS" id="PR01100">
    <property type="entry name" value="SHIKIMTKNASE"/>
</dbReference>
<dbReference type="SUPFAM" id="SSF52540">
    <property type="entry name" value="P-loop containing nucleoside triphosphate hydrolases"/>
    <property type="match status" value="1"/>
</dbReference>
<dbReference type="PROSITE" id="PS01128">
    <property type="entry name" value="SHIKIMATE_KINASE"/>
    <property type="match status" value="1"/>
</dbReference>
<name>AROK_BURP1</name>
<reference key="1">
    <citation type="journal article" date="2010" name="Genome Biol. Evol.">
        <title>Continuing evolution of Burkholderia mallei through genome reduction and large-scale rearrangements.</title>
        <authorList>
            <person name="Losada L."/>
            <person name="Ronning C.M."/>
            <person name="DeShazer D."/>
            <person name="Woods D."/>
            <person name="Fedorova N."/>
            <person name="Kim H.S."/>
            <person name="Shabalina S.A."/>
            <person name="Pearson T.R."/>
            <person name="Brinkac L."/>
            <person name="Tan P."/>
            <person name="Nandi T."/>
            <person name="Crabtree J."/>
            <person name="Badger J."/>
            <person name="Beckstrom-Sternberg S."/>
            <person name="Saqib M."/>
            <person name="Schutzer S.E."/>
            <person name="Keim P."/>
            <person name="Nierman W.C."/>
        </authorList>
    </citation>
    <scope>NUCLEOTIDE SEQUENCE [LARGE SCALE GENOMIC DNA]</scope>
    <source>
        <strain>1710b</strain>
    </source>
</reference>
<evidence type="ECO:0000255" key="1">
    <source>
        <dbReference type="HAMAP-Rule" id="MF_00109"/>
    </source>
</evidence>
<evidence type="ECO:0000305" key="2"/>